<evidence type="ECO:0000255" key="1">
    <source>
        <dbReference type="HAMAP-Rule" id="MF_01273"/>
    </source>
</evidence>
<reference key="1">
    <citation type="journal article" date="2006" name="J. Bacteriol.">
        <title>Pathogenomic sequence analysis of Bacillus cereus and Bacillus thuringiensis isolates closely related to Bacillus anthracis.</title>
        <authorList>
            <person name="Han C.S."/>
            <person name="Xie G."/>
            <person name="Challacombe J.F."/>
            <person name="Altherr M.R."/>
            <person name="Bhotika S.S."/>
            <person name="Bruce D."/>
            <person name="Campbell C.S."/>
            <person name="Campbell M.L."/>
            <person name="Chen J."/>
            <person name="Chertkov O."/>
            <person name="Cleland C."/>
            <person name="Dimitrijevic M."/>
            <person name="Doggett N.A."/>
            <person name="Fawcett J.J."/>
            <person name="Glavina T."/>
            <person name="Goodwin L.A."/>
            <person name="Hill K.K."/>
            <person name="Hitchcock P."/>
            <person name="Jackson P.J."/>
            <person name="Keim P."/>
            <person name="Kewalramani A.R."/>
            <person name="Longmire J."/>
            <person name="Lucas S."/>
            <person name="Malfatti S."/>
            <person name="McMurry K."/>
            <person name="Meincke L.J."/>
            <person name="Misra M."/>
            <person name="Moseman B.L."/>
            <person name="Mundt M."/>
            <person name="Munk A.C."/>
            <person name="Okinaka R.T."/>
            <person name="Parson-Quintana B."/>
            <person name="Reilly L.P."/>
            <person name="Richardson P."/>
            <person name="Robinson D.L."/>
            <person name="Rubin E."/>
            <person name="Saunders E."/>
            <person name="Tapia R."/>
            <person name="Tesmer J.G."/>
            <person name="Thayer N."/>
            <person name="Thompson L.S."/>
            <person name="Tice H."/>
            <person name="Ticknor L.O."/>
            <person name="Wills P.L."/>
            <person name="Brettin T.S."/>
            <person name="Gilna P."/>
        </authorList>
    </citation>
    <scope>NUCLEOTIDE SEQUENCE [LARGE SCALE GENOMIC DNA]</scope>
    <source>
        <strain>ZK / E33L</strain>
    </source>
</reference>
<accession>Q63A51</accession>
<gene>
    <name evidence="1" type="primary">coaW</name>
    <name type="ordered locus">BCE33L2629</name>
</gene>
<protein>
    <recommendedName>
        <fullName evidence="1">Type II pantothenate kinase</fullName>
        <ecNumber evidence="1">2.7.1.33</ecNumber>
    </recommendedName>
    <alternativeName>
        <fullName evidence="1">PanK-II</fullName>
    </alternativeName>
    <alternativeName>
        <fullName evidence="1">Pantothenic acid kinase</fullName>
    </alternativeName>
</protein>
<dbReference type="EC" id="2.7.1.33" evidence="1"/>
<dbReference type="EMBL" id="CP000001">
    <property type="protein sequence ID" value="AAU17632.1"/>
    <property type="molecule type" value="Genomic_DNA"/>
</dbReference>
<dbReference type="RefSeq" id="WP_000446249.1">
    <property type="nucleotide sequence ID" value="NC_006274.1"/>
</dbReference>
<dbReference type="SMR" id="Q63A51"/>
<dbReference type="KEGG" id="bcz:BCE33L2629"/>
<dbReference type="PATRIC" id="fig|288681.22.peg.2840"/>
<dbReference type="UniPathway" id="UPA00241">
    <property type="reaction ID" value="UER00352"/>
</dbReference>
<dbReference type="Proteomes" id="UP000002612">
    <property type="component" value="Chromosome"/>
</dbReference>
<dbReference type="GO" id="GO:0005829">
    <property type="term" value="C:cytosol"/>
    <property type="evidence" value="ECO:0007669"/>
    <property type="project" value="TreeGrafter"/>
</dbReference>
<dbReference type="GO" id="GO:0005524">
    <property type="term" value="F:ATP binding"/>
    <property type="evidence" value="ECO:0007669"/>
    <property type="project" value="UniProtKB-UniRule"/>
</dbReference>
<dbReference type="GO" id="GO:0004594">
    <property type="term" value="F:pantothenate kinase activity"/>
    <property type="evidence" value="ECO:0007669"/>
    <property type="project" value="UniProtKB-UniRule"/>
</dbReference>
<dbReference type="GO" id="GO:0015937">
    <property type="term" value="P:coenzyme A biosynthetic process"/>
    <property type="evidence" value="ECO:0007669"/>
    <property type="project" value="UniProtKB-UniRule"/>
</dbReference>
<dbReference type="CDD" id="cd24085">
    <property type="entry name" value="ASKHA_NBD_PanK-II_bac"/>
    <property type="match status" value="1"/>
</dbReference>
<dbReference type="Gene3D" id="3.30.420.40">
    <property type="match status" value="3"/>
</dbReference>
<dbReference type="HAMAP" id="MF_01273">
    <property type="entry name" value="Pantothen_kinase_2"/>
    <property type="match status" value="1"/>
</dbReference>
<dbReference type="InterPro" id="IPR043129">
    <property type="entry name" value="ATPase_NBD"/>
</dbReference>
<dbReference type="InterPro" id="IPR004567">
    <property type="entry name" value="Type_II_PanK"/>
</dbReference>
<dbReference type="InterPro" id="IPR011602">
    <property type="entry name" value="Type_II_PanK_bac"/>
</dbReference>
<dbReference type="NCBIfam" id="TIGR00555">
    <property type="entry name" value="panK_eukar"/>
    <property type="match status" value="1"/>
</dbReference>
<dbReference type="NCBIfam" id="NF009842">
    <property type="entry name" value="PRK13317.1"/>
    <property type="match status" value="1"/>
</dbReference>
<dbReference type="PANTHER" id="PTHR12280:SF20">
    <property type="entry name" value="4'-PHOSPHOPANTETHEINE PHOSPHATASE"/>
    <property type="match status" value="1"/>
</dbReference>
<dbReference type="PANTHER" id="PTHR12280">
    <property type="entry name" value="PANTOTHENATE KINASE"/>
    <property type="match status" value="1"/>
</dbReference>
<dbReference type="Pfam" id="PF03630">
    <property type="entry name" value="Fumble"/>
    <property type="match status" value="1"/>
</dbReference>
<dbReference type="PIRSF" id="PIRSF036940">
    <property type="entry name" value="PanK_bac_aCoA"/>
    <property type="match status" value="1"/>
</dbReference>
<dbReference type="SUPFAM" id="SSF53067">
    <property type="entry name" value="Actin-like ATPase domain"/>
    <property type="match status" value="1"/>
</dbReference>
<organism>
    <name type="scientific">Bacillus cereus (strain ZK / E33L)</name>
    <dbReference type="NCBI Taxonomy" id="288681"/>
    <lineage>
        <taxon>Bacteria</taxon>
        <taxon>Bacillati</taxon>
        <taxon>Bacillota</taxon>
        <taxon>Bacilli</taxon>
        <taxon>Bacillales</taxon>
        <taxon>Bacillaceae</taxon>
        <taxon>Bacillus</taxon>
        <taxon>Bacillus cereus group</taxon>
    </lineage>
</organism>
<proteinExistence type="inferred from homology"/>
<sequence length="276" mass="30209">MESTIGIDAGGTLTKIAYLNEKKKLTFEKFYSNEQDKIIDWLKKQTSIKQICITGGKAKQLQQLLSDSYKIVELNEFEATLVGVRYILKEEKYDINNFVLTNIGTGTSIHYIYNDRYIRAGGTGVGGGTIMGLSKLLTNIDHFEDVIPLTKVGSRKGLDITVGDIYGGILSPIDNSLTASNFGKAATIESNYNNSDILATVQGLVGEVVTALSLQFAETKNIDHIIYIGSTLCNNIHLQNIISSYTKYQNKTPIFLRDGGNSGAIGALLYATNKKS</sequence>
<name>COAW_BACCZ</name>
<comment type="function">
    <text evidence="1">Catalyzes the phosphorylation of pantothenate (Pan), the first step in CoA biosynthesis.</text>
</comment>
<comment type="catalytic activity">
    <reaction evidence="1">
        <text>(R)-pantothenate + ATP = (R)-4'-phosphopantothenate + ADP + H(+)</text>
        <dbReference type="Rhea" id="RHEA:16373"/>
        <dbReference type="ChEBI" id="CHEBI:10986"/>
        <dbReference type="ChEBI" id="CHEBI:15378"/>
        <dbReference type="ChEBI" id="CHEBI:29032"/>
        <dbReference type="ChEBI" id="CHEBI:30616"/>
        <dbReference type="ChEBI" id="CHEBI:456216"/>
        <dbReference type="EC" id="2.7.1.33"/>
    </reaction>
</comment>
<comment type="pathway">
    <text evidence="1">Cofactor biosynthesis; coenzyme A biosynthesis; CoA from (R)-pantothenate: step 1/5.</text>
</comment>
<comment type="subunit">
    <text evidence="1">Homodimer.</text>
</comment>
<comment type="subcellular location">
    <subcellularLocation>
        <location evidence="1">Cytoplasm</location>
    </subcellularLocation>
</comment>
<comment type="similarity">
    <text evidence="1">Belongs to the type II pantothenate kinase family.</text>
</comment>
<feature type="chain" id="PRO_0000261340" description="Type II pantothenate kinase">
    <location>
        <begin position="1"/>
        <end position="276"/>
    </location>
</feature>
<feature type="active site" description="Proton acceptor" evidence="1">
    <location>
        <position position="76"/>
    </location>
</feature>
<feature type="binding site" evidence="1">
    <location>
        <begin position="8"/>
        <end position="15"/>
    </location>
    <ligand>
        <name>ATP</name>
        <dbReference type="ChEBI" id="CHEBI:30616"/>
    </ligand>
</feature>
<feature type="binding site" evidence="1">
    <location>
        <position position="105"/>
    </location>
    <ligand>
        <name>ATP</name>
        <dbReference type="ChEBI" id="CHEBI:30616"/>
    </ligand>
</feature>
<feature type="binding site" evidence="1">
    <location>
        <begin position="127"/>
        <end position="131"/>
    </location>
    <ligand>
        <name>ATP</name>
        <dbReference type="ChEBI" id="CHEBI:30616"/>
    </ligand>
</feature>
<feature type="binding site" evidence="1">
    <location>
        <position position="143"/>
    </location>
    <ligand>
        <name>ATP</name>
        <dbReference type="ChEBI" id="CHEBI:30616"/>
    </ligand>
</feature>
<feature type="binding site" evidence="1">
    <location>
        <position position="230"/>
    </location>
    <ligand>
        <name>ATP</name>
        <dbReference type="ChEBI" id="CHEBI:30616"/>
    </ligand>
</feature>
<keyword id="KW-0067">ATP-binding</keyword>
<keyword id="KW-0173">Coenzyme A biosynthesis</keyword>
<keyword id="KW-0963">Cytoplasm</keyword>
<keyword id="KW-0418">Kinase</keyword>
<keyword id="KW-0547">Nucleotide-binding</keyword>
<keyword id="KW-0808">Transferase</keyword>